<protein>
    <recommendedName>
        <fullName evidence="6">Peroxisomal ATPase PEX6</fullName>
        <ecNumber evidence="2">3.6.4.-</ecNumber>
    </recommendedName>
    <alternativeName>
        <fullName evidence="6">Peroxin-6</fullName>
    </alternativeName>
    <alternativeName>
        <fullName evidence="6">Peroxisomal biogenesis factor 6</fullName>
    </alternativeName>
    <alternativeName>
        <fullName evidence="5">Peroxisome biosynthesis protein PAS5</fullName>
    </alternativeName>
</protein>
<gene>
    <name evidence="6" type="primary">PEX6</name>
    <name evidence="5" type="synonym">PAS5</name>
    <name type="ordered locus">PAS_chr1-4_0133</name>
</gene>
<evidence type="ECO:0000250" key="1">
    <source>
        <dbReference type="UniProtKB" id="P24004"/>
    </source>
</evidence>
<evidence type="ECO:0000250" key="2">
    <source>
        <dbReference type="UniProtKB" id="P33760"/>
    </source>
</evidence>
<evidence type="ECO:0000269" key="3">
    <source>
    </source>
</evidence>
<evidence type="ECO:0000269" key="4">
    <source>
    </source>
</evidence>
<evidence type="ECO:0000303" key="5">
    <source>
    </source>
</evidence>
<evidence type="ECO:0000303" key="6">
    <source>
    </source>
</evidence>
<evidence type="ECO:0000305" key="7"/>
<accession>C4QXI8</accession>
<organism>
    <name type="scientific">Komagataella phaffii (strain GS115 / ATCC 20864)</name>
    <name type="common">Yeast</name>
    <name type="synonym">Pichia pastoris</name>
    <dbReference type="NCBI Taxonomy" id="644223"/>
    <lineage>
        <taxon>Eukaryota</taxon>
        <taxon>Fungi</taxon>
        <taxon>Dikarya</taxon>
        <taxon>Ascomycota</taxon>
        <taxon>Saccharomycotina</taxon>
        <taxon>Pichiomycetes</taxon>
        <taxon>Pichiales</taxon>
        <taxon>Pichiaceae</taxon>
        <taxon>Komagataella</taxon>
    </lineage>
</organism>
<dbReference type="EC" id="3.6.4.-" evidence="2"/>
<dbReference type="EMBL" id="FN392319">
    <property type="protein sequence ID" value="CAY67961.1"/>
    <property type="molecule type" value="Genomic_DNA"/>
</dbReference>
<dbReference type="RefSeq" id="XP_002490242.1">
    <property type="nucleotide sequence ID" value="XM_002490197.1"/>
</dbReference>
<dbReference type="SMR" id="C4QXI8"/>
<dbReference type="FunCoup" id="C4QXI8">
    <property type="interactions" value="284"/>
</dbReference>
<dbReference type="STRING" id="644223.C4QXI8"/>
<dbReference type="EnsemblFungi" id="CAY67961">
    <property type="protein sequence ID" value="CAY67961"/>
    <property type="gene ID" value="PAS_chr1-4_0133"/>
</dbReference>
<dbReference type="GeneID" id="8197117"/>
<dbReference type="KEGG" id="ppa:PAS_chr1-4_0133"/>
<dbReference type="eggNOG" id="KOG0736">
    <property type="taxonomic scope" value="Eukaryota"/>
</dbReference>
<dbReference type="HOGENOM" id="CLU_000688_0_1_1"/>
<dbReference type="InParanoid" id="C4QXI8"/>
<dbReference type="OMA" id="DSMLNAM"/>
<dbReference type="OrthoDB" id="5553750at2759"/>
<dbReference type="Proteomes" id="UP000000314">
    <property type="component" value="Chromosome 1"/>
</dbReference>
<dbReference type="GO" id="GO:1904949">
    <property type="term" value="C:ATPase complex"/>
    <property type="evidence" value="ECO:0007669"/>
    <property type="project" value="EnsemblFungi"/>
</dbReference>
<dbReference type="GO" id="GO:0005829">
    <property type="term" value="C:cytosol"/>
    <property type="evidence" value="ECO:0007669"/>
    <property type="project" value="EnsemblFungi"/>
</dbReference>
<dbReference type="GO" id="GO:0005778">
    <property type="term" value="C:peroxisomal membrane"/>
    <property type="evidence" value="ECO:0007669"/>
    <property type="project" value="TreeGrafter"/>
</dbReference>
<dbReference type="GO" id="GO:1990351">
    <property type="term" value="C:transporter complex"/>
    <property type="evidence" value="ECO:0007669"/>
    <property type="project" value="EnsemblFungi"/>
</dbReference>
<dbReference type="GO" id="GO:0005524">
    <property type="term" value="F:ATP binding"/>
    <property type="evidence" value="ECO:0007669"/>
    <property type="project" value="UniProtKB-KW"/>
</dbReference>
<dbReference type="GO" id="GO:0016887">
    <property type="term" value="F:ATP hydrolysis activity"/>
    <property type="evidence" value="ECO:0007669"/>
    <property type="project" value="EnsemblFungi"/>
</dbReference>
<dbReference type="GO" id="GO:0140318">
    <property type="term" value="F:protein transporter activity"/>
    <property type="evidence" value="ECO:0007669"/>
    <property type="project" value="EnsemblFungi"/>
</dbReference>
<dbReference type="GO" id="GO:0016562">
    <property type="term" value="P:protein import into peroxisome matrix, receptor recycling"/>
    <property type="evidence" value="ECO:0007669"/>
    <property type="project" value="EnsemblFungi"/>
</dbReference>
<dbReference type="GO" id="GO:0043335">
    <property type="term" value="P:protein unfolding"/>
    <property type="evidence" value="ECO:0007669"/>
    <property type="project" value="EnsemblFungi"/>
</dbReference>
<dbReference type="CDD" id="cd19527">
    <property type="entry name" value="RecA-like_PEX6_r2"/>
    <property type="match status" value="1"/>
</dbReference>
<dbReference type="FunFam" id="3.40.50.300:FF:000109">
    <property type="entry name" value="Peroxisomal biogenesis factor 6"/>
    <property type="match status" value="1"/>
</dbReference>
<dbReference type="FunFam" id="1.10.8.60:FF:000039">
    <property type="entry name" value="peroxisome biogenesis factor 6"/>
    <property type="match status" value="1"/>
</dbReference>
<dbReference type="Gene3D" id="1.10.8.60">
    <property type="match status" value="1"/>
</dbReference>
<dbReference type="Gene3D" id="3.40.50.300">
    <property type="entry name" value="P-loop containing nucleotide triphosphate hydrolases"/>
    <property type="match status" value="2"/>
</dbReference>
<dbReference type="InterPro" id="IPR003593">
    <property type="entry name" value="AAA+_ATPase"/>
</dbReference>
<dbReference type="InterPro" id="IPR050168">
    <property type="entry name" value="AAA_ATPase_domain"/>
</dbReference>
<dbReference type="InterPro" id="IPR003959">
    <property type="entry name" value="ATPase_AAA_core"/>
</dbReference>
<dbReference type="InterPro" id="IPR003960">
    <property type="entry name" value="ATPase_AAA_CS"/>
</dbReference>
<dbReference type="InterPro" id="IPR027417">
    <property type="entry name" value="P-loop_NTPase"/>
</dbReference>
<dbReference type="InterPro" id="IPR056995">
    <property type="entry name" value="PEX6_4th_dom"/>
</dbReference>
<dbReference type="InterPro" id="IPR047533">
    <property type="entry name" value="RecA-like_PEX6_r2"/>
</dbReference>
<dbReference type="PANTHER" id="PTHR23077">
    <property type="entry name" value="AAA-FAMILY ATPASE"/>
    <property type="match status" value="1"/>
</dbReference>
<dbReference type="PANTHER" id="PTHR23077:SF9">
    <property type="entry name" value="PEROXISOMAL ATPASE PEX6"/>
    <property type="match status" value="1"/>
</dbReference>
<dbReference type="Pfam" id="PF00004">
    <property type="entry name" value="AAA"/>
    <property type="match status" value="2"/>
</dbReference>
<dbReference type="Pfam" id="PF23315">
    <property type="entry name" value="PEX6_4th"/>
    <property type="match status" value="1"/>
</dbReference>
<dbReference type="SMART" id="SM00382">
    <property type="entry name" value="AAA"/>
    <property type="match status" value="2"/>
</dbReference>
<dbReference type="SUPFAM" id="SSF52540">
    <property type="entry name" value="P-loop containing nucleoside triphosphate hydrolases"/>
    <property type="match status" value="2"/>
</dbReference>
<dbReference type="PROSITE" id="PS00674">
    <property type="entry name" value="AAA"/>
    <property type="match status" value="1"/>
</dbReference>
<reference key="1">
    <citation type="journal article" date="2009" name="Nat. Biotechnol.">
        <title>Genome sequence of the recombinant protein production host Pichia pastoris.</title>
        <authorList>
            <person name="De Schutter K."/>
            <person name="Lin Y.-C."/>
            <person name="Tiels P."/>
            <person name="Van Hecke A."/>
            <person name="Glinka S."/>
            <person name="Weber-Lehmann J."/>
            <person name="Rouze P."/>
            <person name="Van de Peer Y."/>
            <person name="Callewaert N."/>
        </authorList>
    </citation>
    <scope>NUCLEOTIDE SEQUENCE [LARGE SCALE GENOMIC DNA]</scope>
    <source>
        <strain>GS115 / ATCC 20864</strain>
    </source>
</reference>
<reference key="2">
    <citation type="journal article" date="1993" name="J. Cell Biol.">
        <title>Cloning and characterization of PAS5: a gene required for peroxisome biogenesis in the methylotrophic yeast Pichia pastoris.</title>
        <authorList>
            <person name="Spong A.P."/>
            <person name="Subramani S."/>
        </authorList>
    </citation>
    <scope>FUNCTION</scope>
    <scope>DISRUPTION PHENOTYPE</scope>
</reference>
<reference key="3">
    <citation type="journal article" date="1998" name="Mol. Cell. Biol.">
        <title>Two AAA family peroxins, PpPex1p and PpPex6p, interact with each other in an ATP-dependent manner and are associated with different subcellular membranous structures distinct from peroxisomes.</title>
        <authorList>
            <person name="Faber K.N."/>
            <person name="Heyman J.A."/>
            <person name="Subramani S."/>
        </authorList>
    </citation>
    <scope>FUNCTION</scope>
    <scope>INTERACTION WITH PEX1</scope>
    <scope>SUBCELLULAR LOCATION</scope>
</reference>
<feature type="chain" id="PRO_0000461160" description="Peroxisomal ATPase PEX6">
    <location>
        <begin position="1"/>
        <end position="1166"/>
    </location>
</feature>
<proteinExistence type="evidence at protein level"/>
<sequence>MPGITETSQVTGPVLAHVIVTEDPYDASERAFLSTDLYELLFEDYANGSKSGLTLISIQLMGSSLFNEFQTFKVYESEEQLPPNTVNLCNMGNIIDYSSDFTVDSGYVARVDSLVKLDTVIISVLPEVYSLASQASQHQLVDILGGNDQHTVIRQGDYNKDINGKISLCEPTDQGFLESTTKIIVVKENSLNLPLLDQSQDGSLNYEENVKMNLEHSISNYFSLNSLDPENQITTTGVEFSVKCLDSPISVRKTAKSISVAHDSEDESSPKLVEEDISNEDTLLYAFCKTTELAKIGCLSGDIVKMKSGQCQCTTFECNCESCPVQYRYIRIHAFTDPNTYEKGCIYLNPILSFNLNNPKIVKLCPISIPDKRFELQGFHFSKFIPLAKQVTIARVSSPVTLDRTLQTLFLTNLKTYFESGRKVLSKDQLIPIPVDTLLAKSIFSTYEKLGVDDSQFPTVIPEGKPDAIAWFKVTEVSGELADSASQQFIIDPLKTKMMQSGVVSCSPPKNSQHCNWANYLGCGQMFSFPNVSGVTTSTFEYAKTLRKLIKATIDPSRLVNLQTTVLLSSLSRAIGKSLLVHSLALECGVHLVEIDGYEVLNPSSESKTIGTIRGKLDRVVEGCTPLIVFIKHIEALTKKSEQQQKDSLAVKINELIDEYTAKPGVLFVASTNDSDNLSDELRAKFKFEIVLGVPSEQERTLIFKYLIDFDQKTTPKVTEGTRELSFAPRNDLSLSSLSLQSAGLTPRDLISIVENAKTLAVDRVESLAKHHNVSFENMVYSSGGYIKFTPEDVEKSINTARNKFSDSIGAPRIPNVKWEDVGGLDVVKDEILDTIDMPMKHPELFSNGIKKRSGILFYGPPGTGKTLLAKAIATNFALNFFSVKGPELLNMYIGESEANVRKVFQRARDAKPCVVFFDELDSVAPKRGNQGDSGGVMDRIVSQLLAELDGMSGGDGGDGVFVVGATNRPDLLDEALLRPGRFDKMLYLGVSDTHEKQSKIMEALSRKFHLHPSVDLDKVAESCPFTFTGADFYALCSDAMLNAMTRIANTVDEKIKRYNEELPEKSQVSTRWWFDNVATKEDIDVLVTLEDFDKSRKELVPSVSAEELDHYLRVRQNFEGGKEKKVVQENGQTEHFSNGSANNHITFGDEQVVEAIDENGNSIIA</sequence>
<name>PEX6_KOMPG</name>
<keyword id="KW-0067">ATP-binding</keyword>
<keyword id="KW-0378">Hydrolase</keyword>
<keyword id="KW-0472">Membrane</keyword>
<keyword id="KW-0547">Nucleotide-binding</keyword>
<keyword id="KW-0962">Peroxisome biogenesis</keyword>
<keyword id="KW-1185">Reference proteome</keyword>
<comment type="function">
    <text evidence="1 3 4">Component of the PEX1-PEX6 AAA ATPase complex involved in peroxisome biosynthesis (PubMed:8227124, PubMed:9447990). The complex acts as a protein dislocase complex that mediates the ATP-dependent extraction of the PEX5 receptor from peroxisomal membranes, an essential step for PEX5 recycling. Specifically recognizes PEX5 monoubiquitinated at 'Cys-6', and pulls it out of the peroxisome lumen through the PEX2-PEX10-PEX12 retrotranslocation channel. Extraction by the PEX1-PEX6 AAA ATPase complex is accompanied by unfolding of the TPR repeats and release of bound cargo from PEX5 (By similarity).</text>
</comment>
<comment type="catalytic activity">
    <reaction evidence="1">
        <text>ATP + H2O = ADP + phosphate + H(+)</text>
        <dbReference type="Rhea" id="RHEA:13065"/>
        <dbReference type="ChEBI" id="CHEBI:15377"/>
        <dbReference type="ChEBI" id="CHEBI:15378"/>
        <dbReference type="ChEBI" id="CHEBI:30616"/>
        <dbReference type="ChEBI" id="CHEBI:43474"/>
        <dbReference type="ChEBI" id="CHEBI:456216"/>
    </reaction>
    <physiologicalReaction direction="left-to-right" evidence="1">
        <dbReference type="Rhea" id="RHEA:13066"/>
    </physiologicalReaction>
</comment>
<comment type="subunit">
    <text evidence="4">Interacts with PEX1; forming the PEX1-PEX6 AAA ATPase complex, which is composed of a heterohexamer formed by a trimer of PEX1-PEX6 dimers.</text>
</comment>
<comment type="subcellular location">
    <subcellularLocation>
        <location evidence="4">Membrane</location>
        <topology evidence="4">Peripheral membrane protein</topology>
    </subcellularLocation>
    <text evidence="4">Associated with membranous subcellular structures distinct from mature peroxisomes.</text>
</comment>
<comment type="disruption phenotype">
    <text evidence="3">Leads to a peroxisomal-deficient phenotype with the absence of peroxisomes and the accumulation of aberrant peroxisomal structures resembling 'membranous ghosts'.</text>
</comment>
<comment type="similarity">
    <text evidence="7">Belongs to the AAA ATPase family.</text>
</comment>